<accession>A9MB09</accession>
<sequence>MSGLFITFEGGEGAGKSTQIALLASHLRNHGFDPVITREPGGSPGAEAIRHVILSGNAETYGPAMEALLFAAARADHVDQLIRPALAEGRIVLCDRFIDSGRAYQGVTGNLDATYMAAIERIAIDGAMPDLTLVLDICAERGLSRAGKRRGSDTADRFEKEDIAVHEARRQAFLEIARQEPARCKVIDADRSQEKIADEIRSVVDTILTEKGLL</sequence>
<organism>
    <name type="scientific">Brucella canis (strain ATCC 23365 / NCTC 10854 / RM-666)</name>
    <dbReference type="NCBI Taxonomy" id="483179"/>
    <lineage>
        <taxon>Bacteria</taxon>
        <taxon>Pseudomonadati</taxon>
        <taxon>Pseudomonadota</taxon>
        <taxon>Alphaproteobacteria</taxon>
        <taxon>Hyphomicrobiales</taxon>
        <taxon>Brucellaceae</taxon>
        <taxon>Brucella/Ochrobactrum group</taxon>
        <taxon>Brucella</taxon>
    </lineage>
</organism>
<name>KTHY_BRUC2</name>
<reference key="1">
    <citation type="submission" date="2007-10" db="EMBL/GenBank/DDBJ databases">
        <title>Brucella canis ATCC 23365 whole genome shotgun sequencing project.</title>
        <authorList>
            <person name="Setubal J.C."/>
            <person name="Bowns C."/>
            <person name="Boyle S."/>
            <person name="Crasta O.R."/>
            <person name="Czar M.J."/>
            <person name="Dharmanolla C."/>
            <person name="Gillespie J.J."/>
            <person name="Kenyon R.W."/>
            <person name="Lu J."/>
            <person name="Mane S."/>
            <person name="Mohapatra S."/>
            <person name="Nagrani S."/>
            <person name="Purkayastha A."/>
            <person name="Rajasimha H.K."/>
            <person name="Shallom J.M."/>
            <person name="Shallom S."/>
            <person name="Shukla M."/>
            <person name="Snyder E.E."/>
            <person name="Sobral B.W."/>
            <person name="Wattam A.R."/>
            <person name="Will R."/>
            <person name="Williams K."/>
            <person name="Yoo H."/>
            <person name="Bruce D."/>
            <person name="Detter C."/>
            <person name="Munk C."/>
            <person name="Brettin T.S."/>
        </authorList>
    </citation>
    <scope>NUCLEOTIDE SEQUENCE [LARGE SCALE GENOMIC DNA]</scope>
    <source>
        <strain>ATCC 23365 / NCTC 10854 / RM-666</strain>
    </source>
</reference>
<feature type="chain" id="PRO_1000076958" description="Thymidylate kinase">
    <location>
        <begin position="1"/>
        <end position="214"/>
    </location>
</feature>
<feature type="binding site" evidence="1">
    <location>
        <begin position="10"/>
        <end position="17"/>
    </location>
    <ligand>
        <name>ATP</name>
        <dbReference type="ChEBI" id="CHEBI:30616"/>
    </ligand>
</feature>
<protein>
    <recommendedName>
        <fullName evidence="1">Thymidylate kinase</fullName>
        <ecNumber evidence="1">2.7.4.9</ecNumber>
    </recommendedName>
    <alternativeName>
        <fullName evidence="1">dTMP kinase</fullName>
    </alternativeName>
</protein>
<gene>
    <name evidence="1" type="primary">tmk</name>
    <name type="ordered locus">BCAN_A1009</name>
</gene>
<proteinExistence type="inferred from homology"/>
<evidence type="ECO:0000255" key="1">
    <source>
        <dbReference type="HAMAP-Rule" id="MF_00165"/>
    </source>
</evidence>
<dbReference type="EC" id="2.7.4.9" evidence="1"/>
<dbReference type="EMBL" id="CP000872">
    <property type="protein sequence ID" value="ABX62062.1"/>
    <property type="molecule type" value="Genomic_DNA"/>
</dbReference>
<dbReference type="RefSeq" id="WP_004691859.1">
    <property type="nucleotide sequence ID" value="NC_010103.1"/>
</dbReference>
<dbReference type="SMR" id="A9MB09"/>
<dbReference type="GeneID" id="55590687"/>
<dbReference type="KEGG" id="bcs:BCAN_A1009"/>
<dbReference type="HOGENOM" id="CLU_049131_0_0_5"/>
<dbReference type="PhylomeDB" id="A9MB09"/>
<dbReference type="Proteomes" id="UP000001385">
    <property type="component" value="Chromosome I"/>
</dbReference>
<dbReference type="GO" id="GO:0005829">
    <property type="term" value="C:cytosol"/>
    <property type="evidence" value="ECO:0007669"/>
    <property type="project" value="TreeGrafter"/>
</dbReference>
<dbReference type="GO" id="GO:0005524">
    <property type="term" value="F:ATP binding"/>
    <property type="evidence" value="ECO:0007669"/>
    <property type="project" value="UniProtKB-UniRule"/>
</dbReference>
<dbReference type="GO" id="GO:0004798">
    <property type="term" value="F:dTMP kinase activity"/>
    <property type="evidence" value="ECO:0007669"/>
    <property type="project" value="UniProtKB-UniRule"/>
</dbReference>
<dbReference type="GO" id="GO:0006233">
    <property type="term" value="P:dTDP biosynthetic process"/>
    <property type="evidence" value="ECO:0007669"/>
    <property type="project" value="InterPro"/>
</dbReference>
<dbReference type="GO" id="GO:0006235">
    <property type="term" value="P:dTTP biosynthetic process"/>
    <property type="evidence" value="ECO:0007669"/>
    <property type="project" value="UniProtKB-UniRule"/>
</dbReference>
<dbReference type="GO" id="GO:0006227">
    <property type="term" value="P:dUDP biosynthetic process"/>
    <property type="evidence" value="ECO:0007669"/>
    <property type="project" value="TreeGrafter"/>
</dbReference>
<dbReference type="CDD" id="cd01672">
    <property type="entry name" value="TMPK"/>
    <property type="match status" value="1"/>
</dbReference>
<dbReference type="FunFam" id="3.40.50.300:FF:000225">
    <property type="entry name" value="Thymidylate kinase"/>
    <property type="match status" value="1"/>
</dbReference>
<dbReference type="Gene3D" id="3.40.50.300">
    <property type="entry name" value="P-loop containing nucleotide triphosphate hydrolases"/>
    <property type="match status" value="1"/>
</dbReference>
<dbReference type="HAMAP" id="MF_00165">
    <property type="entry name" value="Thymidylate_kinase"/>
    <property type="match status" value="1"/>
</dbReference>
<dbReference type="InterPro" id="IPR027417">
    <property type="entry name" value="P-loop_NTPase"/>
</dbReference>
<dbReference type="InterPro" id="IPR039430">
    <property type="entry name" value="Thymidylate_kin-like_dom"/>
</dbReference>
<dbReference type="InterPro" id="IPR018095">
    <property type="entry name" value="Thymidylate_kin_CS"/>
</dbReference>
<dbReference type="InterPro" id="IPR018094">
    <property type="entry name" value="Thymidylate_kinase"/>
</dbReference>
<dbReference type="NCBIfam" id="TIGR00041">
    <property type="entry name" value="DTMP_kinase"/>
    <property type="match status" value="1"/>
</dbReference>
<dbReference type="PANTHER" id="PTHR10344">
    <property type="entry name" value="THYMIDYLATE KINASE"/>
    <property type="match status" value="1"/>
</dbReference>
<dbReference type="PANTHER" id="PTHR10344:SF4">
    <property type="entry name" value="UMP-CMP KINASE 2, MITOCHONDRIAL"/>
    <property type="match status" value="1"/>
</dbReference>
<dbReference type="Pfam" id="PF02223">
    <property type="entry name" value="Thymidylate_kin"/>
    <property type="match status" value="1"/>
</dbReference>
<dbReference type="SUPFAM" id="SSF52540">
    <property type="entry name" value="P-loop containing nucleoside triphosphate hydrolases"/>
    <property type="match status" value="1"/>
</dbReference>
<dbReference type="PROSITE" id="PS01331">
    <property type="entry name" value="THYMIDYLATE_KINASE"/>
    <property type="match status" value="1"/>
</dbReference>
<keyword id="KW-0067">ATP-binding</keyword>
<keyword id="KW-0418">Kinase</keyword>
<keyword id="KW-0545">Nucleotide biosynthesis</keyword>
<keyword id="KW-0547">Nucleotide-binding</keyword>
<keyword id="KW-1185">Reference proteome</keyword>
<keyword id="KW-0808">Transferase</keyword>
<comment type="function">
    <text evidence="1">Phosphorylation of dTMP to form dTDP in both de novo and salvage pathways of dTTP synthesis.</text>
</comment>
<comment type="catalytic activity">
    <reaction evidence="1">
        <text>dTMP + ATP = dTDP + ADP</text>
        <dbReference type="Rhea" id="RHEA:13517"/>
        <dbReference type="ChEBI" id="CHEBI:30616"/>
        <dbReference type="ChEBI" id="CHEBI:58369"/>
        <dbReference type="ChEBI" id="CHEBI:63528"/>
        <dbReference type="ChEBI" id="CHEBI:456216"/>
        <dbReference type="EC" id="2.7.4.9"/>
    </reaction>
</comment>
<comment type="similarity">
    <text evidence="1">Belongs to the thymidylate kinase family.</text>
</comment>